<dbReference type="EC" id="3.1.21.10" evidence="1"/>
<dbReference type="EMBL" id="CP000766">
    <property type="protein sequence ID" value="ABY72112.1"/>
    <property type="molecule type" value="Genomic_DNA"/>
</dbReference>
<dbReference type="RefSeq" id="WP_012150376.1">
    <property type="nucleotide sequence ID" value="NC_010263.3"/>
</dbReference>
<dbReference type="SMR" id="B0BW86"/>
<dbReference type="GeneID" id="79936952"/>
<dbReference type="KEGG" id="rrj:RrIowa_0199"/>
<dbReference type="eggNOG" id="COG0817">
    <property type="taxonomic scope" value="Bacteria"/>
</dbReference>
<dbReference type="HOGENOM" id="CLU_091257_1_0_5"/>
<dbReference type="Proteomes" id="UP000000796">
    <property type="component" value="Chromosome"/>
</dbReference>
<dbReference type="GO" id="GO:0005737">
    <property type="term" value="C:cytoplasm"/>
    <property type="evidence" value="ECO:0007669"/>
    <property type="project" value="UniProtKB-SubCell"/>
</dbReference>
<dbReference type="GO" id="GO:0048476">
    <property type="term" value="C:Holliday junction resolvase complex"/>
    <property type="evidence" value="ECO:0007669"/>
    <property type="project" value="UniProtKB-UniRule"/>
</dbReference>
<dbReference type="GO" id="GO:0008821">
    <property type="term" value="F:crossover junction DNA endonuclease activity"/>
    <property type="evidence" value="ECO:0007669"/>
    <property type="project" value="UniProtKB-UniRule"/>
</dbReference>
<dbReference type="GO" id="GO:0003677">
    <property type="term" value="F:DNA binding"/>
    <property type="evidence" value="ECO:0007669"/>
    <property type="project" value="UniProtKB-KW"/>
</dbReference>
<dbReference type="GO" id="GO:0000287">
    <property type="term" value="F:magnesium ion binding"/>
    <property type="evidence" value="ECO:0007669"/>
    <property type="project" value="UniProtKB-UniRule"/>
</dbReference>
<dbReference type="GO" id="GO:0006310">
    <property type="term" value="P:DNA recombination"/>
    <property type="evidence" value="ECO:0007669"/>
    <property type="project" value="UniProtKB-UniRule"/>
</dbReference>
<dbReference type="GO" id="GO:0006281">
    <property type="term" value="P:DNA repair"/>
    <property type="evidence" value="ECO:0007669"/>
    <property type="project" value="UniProtKB-UniRule"/>
</dbReference>
<dbReference type="CDD" id="cd16962">
    <property type="entry name" value="RuvC"/>
    <property type="match status" value="1"/>
</dbReference>
<dbReference type="FunFam" id="3.30.420.10:FF:000002">
    <property type="entry name" value="Crossover junction endodeoxyribonuclease RuvC"/>
    <property type="match status" value="1"/>
</dbReference>
<dbReference type="Gene3D" id="3.30.420.10">
    <property type="entry name" value="Ribonuclease H-like superfamily/Ribonuclease H"/>
    <property type="match status" value="1"/>
</dbReference>
<dbReference type="HAMAP" id="MF_00034">
    <property type="entry name" value="RuvC"/>
    <property type="match status" value="1"/>
</dbReference>
<dbReference type="InterPro" id="IPR012337">
    <property type="entry name" value="RNaseH-like_sf"/>
</dbReference>
<dbReference type="InterPro" id="IPR036397">
    <property type="entry name" value="RNaseH_sf"/>
</dbReference>
<dbReference type="InterPro" id="IPR020563">
    <property type="entry name" value="X-over_junc_endoDNase_Mg_BS"/>
</dbReference>
<dbReference type="InterPro" id="IPR002176">
    <property type="entry name" value="X-over_junc_endoDNase_RuvC"/>
</dbReference>
<dbReference type="NCBIfam" id="TIGR00228">
    <property type="entry name" value="ruvC"/>
    <property type="match status" value="1"/>
</dbReference>
<dbReference type="PANTHER" id="PTHR30194">
    <property type="entry name" value="CROSSOVER JUNCTION ENDODEOXYRIBONUCLEASE RUVC"/>
    <property type="match status" value="1"/>
</dbReference>
<dbReference type="PANTHER" id="PTHR30194:SF3">
    <property type="entry name" value="CROSSOVER JUNCTION ENDODEOXYRIBONUCLEASE RUVC"/>
    <property type="match status" value="1"/>
</dbReference>
<dbReference type="Pfam" id="PF02075">
    <property type="entry name" value="RuvC"/>
    <property type="match status" value="1"/>
</dbReference>
<dbReference type="PRINTS" id="PR00696">
    <property type="entry name" value="RSOLVASERUVC"/>
</dbReference>
<dbReference type="SUPFAM" id="SSF53098">
    <property type="entry name" value="Ribonuclease H-like"/>
    <property type="match status" value="1"/>
</dbReference>
<dbReference type="PROSITE" id="PS01321">
    <property type="entry name" value="RUVC"/>
    <property type="match status" value="1"/>
</dbReference>
<organism>
    <name type="scientific">Rickettsia rickettsii (strain Iowa)</name>
    <dbReference type="NCBI Taxonomy" id="452659"/>
    <lineage>
        <taxon>Bacteria</taxon>
        <taxon>Pseudomonadati</taxon>
        <taxon>Pseudomonadota</taxon>
        <taxon>Alphaproteobacteria</taxon>
        <taxon>Rickettsiales</taxon>
        <taxon>Rickettsiaceae</taxon>
        <taxon>Rickettsieae</taxon>
        <taxon>Rickettsia</taxon>
        <taxon>spotted fever group</taxon>
    </lineage>
</organism>
<feature type="chain" id="PRO_1000074496" description="Crossover junction endodeoxyribonuclease RuvC">
    <location>
        <begin position="1"/>
        <end position="157"/>
    </location>
</feature>
<feature type="active site" evidence="1">
    <location>
        <position position="7"/>
    </location>
</feature>
<feature type="active site" evidence="1">
    <location>
        <position position="67"/>
    </location>
</feature>
<feature type="active site" evidence="1">
    <location>
        <position position="140"/>
    </location>
</feature>
<feature type="binding site" evidence="1">
    <location>
        <position position="7"/>
    </location>
    <ligand>
        <name>Mg(2+)</name>
        <dbReference type="ChEBI" id="CHEBI:18420"/>
        <label>1</label>
    </ligand>
</feature>
<feature type="binding site" evidence="1">
    <location>
        <position position="67"/>
    </location>
    <ligand>
        <name>Mg(2+)</name>
        <dbReference type="ChEBI" id="CHEBI:18420"/>
        <label>2</label>
    </ligand>
</feature>
<feature type="binding site" evidence="1">
    <location>
        <position position="140"/>
    </location>
    <ligand>
        <name>Mg(2+)</name>
        <dbReference type="ChEBI" id="CHEBI:18420"/>
        <label>1</label>
    </ligand>
</feature>
<proteinExistence type="inferred from homology"/>
<reference key="1">
    <citation type="journal article" date="2008" name="Infect. Immun.">
        <title>Genomic comparison of virulent Rickettsia rickettsii Sheila Smith and avirulent Rickettsia rickettsii Iowa.</title>
        <authorList>
            <person name="Ellison D.W."/>
            <person name="Clark T.R."/>
            <person name="Sturdevant D.E."/>
            <person name="Virtaneva K."/>
            <person name="Porcella S.F."/>
            <person name="Hackstadt T."/>
        </authorList>
    </citation>
    <scope>NUCLEOTIDE SEQUENCE [LARGE SCALE GENOMIC DNA]</scope>
    <source>
        <strain>Iowa</strain>
    </source>
</reference>
<name>RUVC_RICRO</name>
<accession>B0BW86</accession>
<protein>
    <recommendedName>
        <fullName evidence="1">Crossover junction endodeoxyribonuclease RuvC</fullName>
        <ecNumber evidence="1">3.1.21.10</ecNumber>
    </recommendedName>
    <alternativeName>
        <fullName evidence="1">Holliday junction nuclease RuvC</fullName>
    </alternativeName>
    <alternativeName>
        <fullName evidence="1">Holliday junction resolvase RuvC</fullName>
    </alternativeName>
</protein>
<sequence>MIILGIDPALGSLGWAVVAKETAQLKYLASGIIRTNSKDAMHHRLAFINSTLEKVILEYQPNMAAIEETFVNTNSVTSLKLGYARGAIMSLIGRYNLDMREFKPNTVKKTVTGYGHAEKDQMLHMIKLLLSGTALITNSDEADAVAIAYTCLVTKNY</sequence>
<comment type="function">
    <text evidence="1">The RuvA-RuvB-RuvC complex processes Holliday junction (HJ) DNA during genetic recombination and DNA repair. Endonuclease that resolves HJ intermediates. Cleaves cruciform DNA by making single-stranded nicks across the HJ at symmetrical positions within the homologous arms, yielding a 5'-phosphate and a 3'-hydroxyl group; requires a central core of homology in the junction. The consensus cleavage sequence is 5'-(A/T)TT(C/G)-3'. Cleavage occurs on the 3'-side of the TT dinucleotide at the point of strand exchange. HJ branch migration catalyzed by RuvA-RuvB allows RuvC to scan DNA until it finds its consensus sequence, where it cleaves and resolves the cruciform DNA.</text>
</comment>
<comment type="catalytic activity">
    <reaction evidence="1">
        <text>Endonucleolytic cleavage at a junction such as a reciprocal single-stranded crossover between two homologous DNA duplexes (Holliday junction).</text>
        <dbReference type="EC" id="3.1.21.10"/>
    </reaction>
</comment>
<comment type="cofactor">
    <cofactor evidence="1">
        <name>Mg(2+)</name>
        <dbReference type="ChEBI" id="CHEBI:18420"/>
    </cofactor>
    <text evidence="1">Binds 2 Mg(2+) ion per subunit.</text>
</comment>
<comment type="subunit">
    <text evidence="1">Homodimer which binds Holliday junction (HJ) DNA. The HJ becomes 2-fold symmetrical on binding to RuvC with unstacked arms; it has a different conformation from HJ DNA in complex with RuvA. In the full resolvosome a probable DNA-RuvA(4)-RuvB(12)-RuvC(2) complex forms which resolves the HJ.</text>
</comment>
<comment type="subcellular location">
    <subcellularLocation>
        <location evidence="1">Cytoplasm</location>
    </subcellularLocation>
</comment>
<comment type="similarity">
    <text evidence="1">Belongs to the RuvC family.</text>
</comment>
<keyword id="KW-0963">Cytoplasm</keyword>
<keyword id="KW-0227">DNA damage</keyword>
<keyword id="KW-0233">DNA recombination</keyword>
<keyword id="KW-0234">DNA repair</keyword>
<keyword id="KW-0238">DNA-binding</keyword>
<keyword id="KW-0255">Endonuclease</keyword>
<keyword id="KW-0378">Hydrolase</keyword>
<keyword id="KW-0460">Magnesium</keyword>
<keyword id="KW-0479">Metal-binding</keyword>
<keyword id="KW-0540">Nuclease</keyword>
<evidence type="ECO:0000255" key="1">
    <source>
        <dbReference type="HAMAP-Rule" id="MF_00034"/>
    </source>
</evidence>
<gene>
    <name evidence="1" type="primary">ruvC</name>
    <name type="ordered locus">RrIowa_0199</name>
</gene>